<comment type="function">
    <text evidence="1">Participates actively in the response to hyperosmotic and heat shock by preventing the aggregation of stress-denatured proteins and by disaggregating proteins, also in an autonomous, DnaK-independent fashion. Unfolded proteins bind initially to DnaJ; upon interaction with the DnaJ-bound protein, DnaK hydrolyzes its bound ATP, resulting in the formation of a stable complex. GrpE releases ADP from DnaK; ATP binding to DnaK triggers the release of the substrate protein, thus completing the reaction cycle. Several rounds of ATP-dependent interactions between DnaJ, DnaK and GrpE are required for fully efficient folding. Also involved, together with DnaK and GrpE, in the DNA replication of plasmids through activation of initiation proteins.</text>
</comment>
<comment type="cofactor">
    <cofactor evidence="1">
        <name>Zn(2+)</name>
        <dbReference type="ChEBI" id="CHEBI:29105"/>
    </cofactor>
    <text evidence="1">Binds 2 Zn(2+) ions per monomer.</text>
</comment>
<comment type="subunit">
    <text evidence="1">Homodimer.</text>
</comment>
<comment type="subcellular location">
    <subcellularLocation>
        <location evidence="1">Cytoplasm</location>
    </subcellularLocation>
</comment>
<comment type="domain">
    <text evidence="1">The J domain is necessary and sufficient to stimulate DnaK ATPase activity. Zinc center 1 plays an important role in the autonomous, DnaK-independent chaperone activity of DnaJ. Zinc center 2 is essential for interaction with DnaK and for DnaJ activity.</text>
</comment>
<comment type="similarity">
    <text evidence="1">Belongs to the DnaJ family.</text>
</comment>
<proteinExistence type="inferred from homology"/>
<feature type="chain" id="PRO_0000070797" description="Chaperone protein DnaJ">
    <location>
        <begin position="1"/>
        <end position="369"/>
    </location>
</feature>
<feature type="domain" description="J" evidence="1">
    <location>
        <begin position="4"/>
        <end position="69"/>
    </location>
</feature>
<feature type="repeat" description="CXXCXGXG motif">
    <location>
        <begin position="143"/>
        <end position="150"/>
    </location>
</feature>
<feature type="repeat" description="CXXCXGXG motif">
    <location>
        <begin position="159"/>
        <end position="166"/>
    </location>
</feature>
<feature type="repeat" description="CXXCXGXG motif">
    <location>
        <begin position="181"/>
        <end position="188"/>
    </location>
</feature>
<feature type="repeat" description="CXXCXGXG motif">
    <location>
        <begin position="195"/>
        <end position="202"/>
    </location>
</feature>
<feature type="zinc finger region" description="CR-type" evidence="1">
    <location>
        <begin position="130"/>
        <end position="207"/>
    </location>
</feature>
<feature type="binding site" evidence="1">
    <location>
        <position position="143"/>
    </location>
    <ligand>
        <name>Zn(2+)</name>
        <dbReference type="ChEBI" id="CHEBI:29105"/>
        <label>1</label>
    </ligand>
</feature>
<feature type="binding site" evidence="1">
    <location>
        <position position="146"/>
    </location>
    <ligand>
        <name>Zn(2+)</name>
        <dbReference type="ChEBI" id="CHEBI:29105"/>
        <label>1</label>
    </ligand>
</feature>
<feature type="binding site" evidence="1">
    <location>
        <position position="159"/>
    </location>
    <ligand>
        <name>Zn(2+)</name>
        <dbReference type="ChEBI" id="CHEBI:29105"/>
        <label>2</label>
    </ligand>
</feature>
<feature type="binding site" evidence="1">
    <location>
        <position position="162"/>
    </location>
    <ligand>
        <name>Zn(2+)</name>
        <dbReference type="ChEBI" id="CHEBI:29105"/>
        <label>2</label>
    </ligand>
</feature>
<feature type="binding site" evidence="1">
    <location>
        <position position="181"/>
    </location>
    <ligand>
        <name>Zn(2+)</name>
        <dbReference type="ChEBI" id="CHEBI:29105"/>
        <label>2</label>
    </ligand>
</feature>
<feature type="binding site" evidence="1">
    <location>
        <position position="184"/>
    </location>
    <ligand>
        <name>Zn(2+)</name>
        <dbReference type="ChEBI" id="CHEBI:29105"/>
        <label>2</label>
    </ligand>
</feature>
<feature type="binding site" evidence="1">
    <location>
        <position position="195"/>
    </location>
    <ligand>
        <name>Zn(2+)</name>
        <dbReference type="ChEBI" id="CHEBI:29105"/>
        <label>1</label>
    </ligand>
</feature>
<feature type="binding site" evidence="1">
    <location>
        <position position="198"/>
    </location>
    <ligand>
        <name>Zn(2+)</name>
        <dbReference type="ChEBI" id="CHEBI:29105"/>
        <label>1</label>
    </ligand>
</feature>
<protein>
    <recommendedName>
        <fullName evidence="1">Chaperone protein DnaJ</fullName>
    </recommendedName>
</protein>
<gene>
    <name evidence="1" type="primary">dnaJ</name>
    <name type="ordered locus">jhp_1252</name>
</gene>
<sequence length="369" mass="41850">MELSYYEILEVEKHSNQETIKKSYRKLALKYHPDRNAGDKEAEEKFKLINEAYGVLGDEKKRALYDRYGKKGLNQAGTSQSDFSDFFEDLGSFFEDAFGFGARGSKRQKSSIAPDYLQMIELSFKEAVFGCKKTIKAQYQSVCESCDGTGAKDKALENCKQCNGQGQVFMRQGFMSFAQTCGACQGKGKIIKTPCQACKGKTYILKDEEIDAIIPEGIDDQNRMVLKNKGNEYEKGKRGDLYLEARVKEDEHFKREGCDLFIKAPVFFTTIALGHTIKVPSLRGDELELKIPRNAKDRQAFAFRNEGVKHPESSYRGSLIVELQVIYPKSLNKEQQGLLEKLHASFGYEGEPHKSVLETCVSKIKDWFK</sequence>
<keyword id="KW-0143">Chaperone</keyword>
<keyword id="KW-0963">Cytoplasm</keyword>
<keyword id="KW-0235">DNA replication</keyword>
<keyword id="KW-0479">Metal-binding</keyword>
<keyword id="KW-0677">Repeat</keyword>
<keyword id="KW-0346">Stress response</keyword>
<keyword id="KW-0862">Zinc</keyword>
<keyword id="KW-0863">Zinc-finger</keyword>
<dbReference type="EMBL" id="AE001439">
    <property type="protein sequence ID" value="AAD06825.1"/>
    <property type="molecule type" value="Genomic_DNA"/>
</dbReference>
<dbReference type="PIR" id="G71831">
    <property type="entry name" value="G71831"/>
</dbReference>
<dbReference type="RefSeq" id="WP_000423836.1">
    <property type="nucleotide sequence ID" value="NC_000921.1"/>
</dbReference>
<dbReference type="SMR" id="Q9ZJQ2"/>
<dbReference type="KEGG" id="hpj:jhp_1252"/>
<dbReference type="PATRIC" id="fig|85963.30.peg.1319"/>
<dbReference type="eggNOG" id="COG0484">
    <property type="taxonomic scope" value="Bacteria"/>
</dbReference>
<dbReference type="Proteomes" id="UP000000804">
    <property type="component" value="Chromosome"/>
</dbReference>
<dbReference type="GO" id="GO:0005737">
    <property type="term" value="C:cytoplasm"/>
    <property type="evidence" value="ECO:0007669"/>
    <property type="project" value="UniProtKB-SubCell"/>
</dbReference>
<dbReference type="GO" id="GO:0005524">
    <property type="term" value="F:ATP binding"/>
    <property type="evidence" value="ECO:0007669"/>
    <property type="project" value="InterPro"/>
</dbReference>
<dbReference type="GO" id="GO:0031072">
    <property type="term" value="F:heat shock protein binding"/>
    <property type="evidence" value="ECO:0007669"/>
    <property type="project" value="InterPro"/>
</dbReference>
<dbReference type="GO" id="GO:0051082">
    <property type="term" value="F:unfolded protein binding"/>
    <property type="evidence" value="ECO:0007669"/>
    <property type="project" value="UniProtKB-UniRule"/>
</dbReference>
<dbReference type="GO" id="GO:0008270">
    <property type="term" value="F:zinc ion binding"/>
    <property type="evidence" value="ECO:0007669"/>
    <property type="project" value="UniProtKB-UniRule"/>
</dbReference>
<dbReference type="GO" id="GO:0051085">
    <property type="term" value="P:chaperone cofactor-dependent protein refolding"/>
    <property type="evidence" value="ECO:0007669"/>
    <property type="project" value="TreeGrafter"/>
</dbReference>
<dbReference type="GO" id="GO:0006260">
    <property type="term" value="P:DNA replication"/>
    <property type="evidence" value="ECO:0007669"/>
    <property type="project" value="UniProtKB-KW"/>
</dbReference>
<dbReference type="GO" id="GO:0042026">
    <property type="term" value="P:protein refolding"/>
    <property type="evidence" value="ECO:0007669"/>
    <property type="project" value="TreeGrafter"/>
</dbReference>
<dbReference type="GO" id="GO:0009408">
    <property type="term" value="P:response to heat"/>
    <property type="evidence" value="ECO:0007669"/>
    <property type="project" value="InterPro"/>
</dbReference>
<dbReference type="CDD" id="cd06257">
    <property type="entry name" value="DnaJ"/>
    <property type="match status" value="1"/>
</dbReference>
<dbReference type="CDD" id="cd10747">
    <property type="entry name" value="DnaJ_C"/>
    <property type="match status" value="1"/>
</dbReference>
<dbReference type="CDD" id="cd10719">
    <property type="entry name" value="DnaJ_zf"/>
    <property type="match status" value="1"/>
</dbReference>
<dbReference type="FunFam" id="1.10.287.110:FF:000034">
    <property type="entry name" value="Chaperone protein DnaJ"/>
    <property type="match status" value="1"/>
</dbReference>
<dbReference type="FunFam" id="2.10.230.10:FF:000002">
    <property type="entry name" value="Molecular chaperone DnaJ"/>
    <property type="match status" value="1"/>
</dbReference>
<dbReference type="Gene3D" id="1.10.287.110">
    <property type="entry name" value="DnaJ domain"/>
    <property type="match status" value="1"/>
</dbReference>
<dbReference type="Gene3D" id="2.10.230.10">
    <property type="entry name" value="Heat shock protein DnaJ, cysteine-rich domain"/>
    <property type="match status" value="1"/>
</dbReference>
<dbReference type="Gene3D" id="2.60.260.20">
    <property type="entry name" value="Urease metallochaperone UreE, N-terminal domain"/>
    <property type="match status" value="2"/>
</dbReference>
<dbReference type="HAMAP" id="MF_01152">
    <property type="entry name" value="DnaJ"/>
    <property type="match status" value="1"/>
</dbReference>
<dbReference type="InterPro" id="IPR012724">
    <property type="entry name" value="DnaJ"/>
</dbReference>
<dbReference type="InterPro" id="IPR002939">
    <property type="entry name" value="DnaJ_C"/>
</dbReference>
<dbReference type="InterPro" id="IPR001623">
    <property type="entry name" value="DnaJ_domain"/>
</dbReference>
<dbReference type="InterPro" id="IPR008971">
    <property type="entry name" value="HSP40/DnaJ_pept-bd"/>
</dbReference>
<dbReference type="InterPro" id="IPR001305">
    <property type="entry name" value="HSP_DnaJ_Cys-rich_dom"/>
</dbReference>
<dbReference type="InterPro" id="IPR036410">
    <property type="entry name" value="HSP_DnaJ_Cys-rich_dom_sf"/>
</dbReference>
<dbReference type="InterPro" id="IPR036869">
    <property type="entry name" value="J_dom_sf"/>
</dbReference>
<dbReference type="NCBIfam" id="TIGR02349">
    <property type="entry name" value="DnaJ_bact"/>
    <property type="match status" value="1"/>
</dbReference>
<dbReference type="NCBIfam" id="NF008035">
    <property type="entry name" value="PRK10767.1"/>
    <property type="match status" value="1"/>
</dbReference>
<dbReference type="NCBIfam" id="NF010881">
    <property type="entry name" value="PRK14288.1"/>
    <property type="match status" value="1"/>
</dbReference>
<dbReference type="PANTHER" id="PTHR43096:SF48">
    <property type="entry name" value="CHAPERONE PROTEIN DNAJ"/>
    <property type="match status" value="1"/>
</dbReference>
<dbReference type="PANTHER" id="PTHR43096">
    <property type="entry name" value="DNAJ HOMOLOG 1, MITOCHONDRIAL-RELATED"/>
    <property type="match status" value="1"/>
</dbReference>
<dbReference type="Pfam" id="PF00226">
    <property type="entry name" value="DnaJ"/>
    <property type="match status" value="1"/>
</dbReference>
<dbReference type="Pfam" id="PF01556">
    <property type="entry name" value="DnaJ_C"/>
    <property type="match status" value="1"/>
</dbReference>
<dbReference type="Pfam" id="PF00684">
    <property type="entry name" value="DnaJ_CXXCXGXG"/>
    <property type="match status" value="1"/>
</dbReference>
<dbReference type="PRINTS" id="PR00625">
    <property type="entry name" value="JDOMAIN"/>
</dbReference>
<dbReference type="SMART" id="SM00271">
    <property type="entry name" value="DnaJ"/>
    <property type="match status" value="1"/>
</dbReference>
<dbReference type="SUPFAM" id="SSF46565">
    <property type="entry name" value="Chaperone J-domain"/>
    <property type="match status" value="1"/>
</dbReference>
<dbReference type="SUPFAM" id="SSF57938">
    <property type="entry name" value="DnaJ/Hsp40 cysteine-rich domain"/>
    <property type="match status" value="1"/>
</dbReference>
<dbReference type="SUPFAM" id="SSF49493">
    <property type="entry name" value="HSP40/DnaJ peptide-binding domain"/>
    <property type="match status" value="2"/>
</dbReference>
<dbReference type="PROSITE" id="PS50076">
    <property type="entry name" value="DNAJ_2"/>
    <property type="match status" value="1"/>
</dbReference>
<dbReference type="PROSITE" id="PS51188">
    <property type="entry name" value="ZF_CR"/>
    <property type="match status" value="1"/>
</dbReference>
<reference key="1">
    <citation type="journal article" date="1999" name="Nature">
        <title>Genomic sequence comparison of two unrelated isolates of the human gastric pathogen Helicobacter pylori.</title>
        <authorList>
            <person name="Alm R.A."/>
            <person name="Ling L.-S.L."/>
            <person name="Moir D.T."/>
            <person name="King B.L."/>
            <person name="Brown E.D."/>
            <person name="Doig P.C."/>
            <person name="Smith D.R."/>
            <person name="Noonan B."/>
            <person name="Guild B.C."/>
            <person name="deJonge B.L."/>
            <person name="Carmel G."/>
            <person name="Tummino P.J."/>
            <person name="Caruso A."/>
            <person name="Uria-Nickelsen M."/>
            <person name="Mills D.M."/>
            <person name="Ives C."/>
            <person name="Gibson R."/>
            <person name="Merberg D."/>
            <person name="Mills S.D."/>
            <person name="Jiang Q."/>
            <person name="Taylor D.E."/>
            <person name="Vovis G.F."/>
            <person name="Trust T.J."/>
        </authorList>
    </citation>
    <scope>NUCLEOTIDE SEQUENCE [LARGE SCALE GENOMIC DNA]</scope>
    <source>
        <strain>J99 / ATCC 700824</strain>
    </source>
</reference>
<organism>
    <name type="scientific">Helicobacter pylori (strain J99 / ATCC 700824)</name>
    <name type="common">Campylobacter pylori J99</name>
    <dbReference type="NCBI Taxonomy" id="85963"/>
    <lineage>
        <taxon>Bacteria</taxon>
        <taxon>Pseudomonadati</taxon>
        <taxon>Campylobacterota</taxon>
        <taxon>Epsilonproteobacteria</taxon>
        <taxon>Campylobacterales</taxon>
        <taxon>Helicobacteraceae</taxon>
        <taxon>Helicobacter</taxon>
    </lineage>
</organism>
<evidence type="ECO:0000255" key="1">
    <source>
        <dbReference type="HAMAP-Rule" id="MF_01152"/>
    </source>
</evidence>
<name>DNAJ_HELPJ</name>
<accession>Q9ZJQ2</accession>